<evidence type="ECO:0000250" key="1"/>
<evidence type="ECO:0000250" key="2">
    <source>
        <dbReference type="UniProtKB" id="P15436"/>
    </source>
</evidence>
<evidence type="ECO:0000250" key="3">
    <source>
        <dbReference type="UniProtKB" id="P21951"/>
    </source>
</evidence>
<evidence type="ECO:0000269" key="4">
    <source>
    </source>
</evidence>
<evidence type="ECO:0000269" key="5">
    <source>
    </source>
</evidence>
<evidence type="ECO:0000269" key="6">
    <source>
    </source>
</evidence>
<evidence type="ECO:0000305" key="7"/>
<accession>F4IFN6</accession>
<accession>Q9ZVC8</accession>
<keyword id="KW-0004">4Fe-4S</keyword>
<keyword id="KW-0235">DNA replication</keyword>
<keyword id="KW-0238">DNA-binding</keyword>
<keyword id="KW-0239">DNA-directed DNA polymerase</keyword>
<keyword id="KW-0408">Iron</keyword>
<keyword id="KW-0411">Iron-sulfur</keyword>
<keyword id="KW-0479">Metal-binding</keyword>
<keyword id="KW-0548">Nucleotidyltransferase</keyword>
<keyword id="KW-0539">Nucleus</keyword>
<keyword id="KW-1185">Reference proteome</keyword>
<keyword id="KW-0808">Transferase</keyword>
<keyword id="KW-0862">Zinc</keyword>
<keyword id="KW-0863">Zinc-finger</keyword>
<name>DPOE2_ARATH</name>
<sequence length="2138" mass="244993">MSGRRCDRRLNVQKVSAADELETKLGFGLFSQGETRLGWLLTFASSSWEDADTGKTFSCVDLFFVTQDGSSFKTKYKFRPYLYAATKDNMELEVEAYLRRRYERQVADIQIVHKEDLYLKNHLSGLQKKYLKVSFDTVQQLVEVKRDLLHIVERNLAKFNALEAYESILSGKREQRPQDCLDSVVDLREYDVPYHVRFAIDNDVRSGQWYNVSISSTDVILEKRTDLLQRAEVRVCAFDIETVKLPLKFPDAEYDQIMMISYMVDGQGFLITNRECVGKDIEDLEYTPKPEFEGYFKVTNVTNEVELLRKWFSHMQELKPGIYVTYNGDFFDWPFIERRASHHGIKMNEELGFRCDQNQGECRAKFVCHLDCFSWVKRDSYLPQGSQGLKAVTKVKLGYDPLEVNPEDMVRFAMEKPQTMASYSVSDAVATYYLYMTYVHPFVFSLATIIPMVPDEVLRKGSGTLCEMLLMVEAYKANVVCPNKNQADPEKFYQGKLLESETYIGGHVECLQSGVFRSDIPTSFKLDASAYQQLIDNLGRDLEYAITVEGKMRMDSVSNFDEVKEVIREKLEKLRDDPIREEGPLIYHLDVAAMYPNIILTNRLQPPSIVTDEVCTACDFNGPEKTCLRKLEWVWRGVTFKGNKSEYYHLKKQIESESVDAGANMQSSKPFLDLPKVEQQSKLKERLKKYCQKAYSRVLDKPITEVREAGICMRENPFYVDTVRSFRDRRYEYKTLNKVWKGKLSEAKASGNLIKIQEAHDMVVVYDSLQLAHKCILNSFYGYVMRKGARWYSMEMAGVVTYTGAKIIQNARLLIERIGKPLELDTDGIWCALPGSFPENFTFKTIDMKKFTISYPCVILNVDVAKNNSNDQYQTLVDPVRKTYNSRSECSIEFEVDGPYKAMIIPASKEEGILIKKRYAVFNHDGTIAELKGFEMKRRGELKLIKVFQAELFDKFLHGSTLEECYSAVAAVANRWLDLLEGQGKDIADSELLDYISESSTMSKSLADYGQQKSCAVTTAKRLADFLGDTMVKDKGLRCQYIVAREPEGTPVSERAVPVAIFQTDDPEKKFYLQKWCKISSYTGIRSIIDWMYYKQRLHSAIQKVITIPAAMQKVANPVLRVRHPYWLEKKVCDKFRQGKIVDMFSSANKDHSTTQDNVVADIEEFCKENRPSVKGPKPVARSFEVDRNHSEGKQQESWDPEFHDISLQNVDKNVDYQGWLELEKRKWKMTLTNKKKRRYSSSLFGFDLEQNINKKVCKGRVGVGSYFRRPEEALTSSYLQIIQLVQSPQSGQFFAWVVVEGLMLKIPLTIPRVFYINSKASIAGNFTGKCINKILPHGKPCYNLMEVNIQEDQFIKESKKLAALLADPEIEGIYETKMPLEFSAICQIGCVCKIEDTAKHRNTQDGWKLGELHRITTTECRYLENSIPLVYLYHSTSTGRAVYVLYCHASKLMSVVVVNPYGDKELLSSALERQFRDRCQELSPEPFSWDGILFQVEYVDHPEAATKFLQKALCEYREENCGATVAVIECPDFNTTKEGVKALEDFPCVRIPFNDDDNSYQPVSWQRPAAKIAVLRCASAIQWLDRRIAQSRYAHVPLGNFGRDWLTFTVDIFLSRALRDQQQVLWVSDNGVPDLGDINNEETFLADETSLLFPGAYRKVSVELKVHRLAVNALLKSDLVSEMEGGGFLGVNSRGSSLNDNGSFDENNGCAQAFRVLKQLIKRLLHDACNSGNIYADSILQHLSWWLRSPSSKLHDPALHLMLHKVMQKVFALLLTDLRRLGAIIIYADFSKVIIDTGKFDLSAAKTYCESLLTVMGSRDIFKLILLEPVHYWHSLLFMDQHNYAGIRATGDEISGNEVTIEPKWSVARHLPEYIQKDFIIIVATFIFGPWKFALEKKRGSAESLEAEMVEYLKEQIGTRFISMIVEKIGNIRSHIKDINVSDASWASGQAPKGDYTFEFIQIITAVLALDQNVQQDVLVMRKILLKYIKVKECAAEAEFIDPGPSFILPNVACSNCGAYRDLDFCRDSALLTEKEWSCADPQCVKIYDKEQIESSIIQMVRQRERMYQLQDLVCNRCNQVKAAHLTEQCECSGSFRCKESGSDFHKRIEIFLDIAKRQKFRLLEECISWILFATSC</sequence>
<reference key="1">
    <citation type="journal article" date="1999" name="Nature">
        <title>Sequence and analysis of chromosome 2 of the plant Arabidopsis thaliana.</title>
        <authorList>
            <person name="Lin X."/>
            <person name="Kaul S."/>
            <person name="Rounsley S.D."/>
            <person name="Shea T.P."/>
            <person name="Benito M.-I."/>
            <person name="Town C.D."/>
            <person name="Fujii C.Y."/>
            <person name="Mason T.M."/>
            <person name="Bowman C.L."/>
            <person name="Barnstead M.E."/>
            <person name="Feldblyum T.V."/>
            <person name="Buell C.R."/>
            <person name="Ketchum K.A."/>
            <person name="Lee J.J."/>
            <person name="Ronning C.M."/>
            <person name="Koo H.L."/>
            <person name="Moffat K.S."/>
            <person name="Cronin L.A."/>
            <person name="Shen M."/>
            <person name="Pai G."/>
            <person name="Van Aken S."/>
            <person name="Umayam L."/>
            <person name="Tallon L.J."/>
            <person name="Gill J.E."/>
            <person name="Adams M.D."/>
            <person name="Carrera A.J."/>
            <person name="Creasy T.H."/>
            <person name="Goodman H.M."/>
            <person name="Somerville C.R."/>
            <person name="Copenhaver G.P."/>
            <person name="Preuss D."/>
            <person name="Nierman W.C."/>
            <person name="White O."/>
            <person name="Eisen J.A."/>
            <person name="Salzberg S.L."/>
            <person name="Fraser C.M."/>
            <person name="Venter J.C."/>
        </authorList>
    </citation>
    <scope>NUCLEOTIDE SEQUENCE [LARGE SCALE GENOMIC DNA]</scope>
    <source>
        <strain>cv. Columbia</strain>
    </source>
</reference>
<reference key="2">
    <citation type="journal article" date="2017" name="Plant J.">
        <title>Araport11: a complete reannotation of the Arabidopsis thaliana reference genome.</title>
        <authorList>
            <person name="Cheng C.Y."/>
            <person name="Krishnakumar V."/>
            <person name="Chan A.P."/>
            <person name="Thibaud-Nissen F."/>
            <person name="Schobel S."/>
            <person name="Town C.D."/>
        </authorList>
    </citation>
    <scope>GENOME REANNOTATION</scope>
    <source>
        <strain>cv. Columbia</strain>
    </source>
</reference>
<reference key="3">
    <citation type="journal article" date="2005" name="Plant Cell">
        <title>Interactions between the cell cycle and embryonic patterning in Arabidopsis uncovered by a mutation in DNA polymerase epsilon.</title>
        <authorList>
            <person name="Jenik P.D."/>
            <person name="Jurkuta R.E.J."/>
            <person name="Barton M.K."/>
        </authorList>
    </citation>
    <scope>FUNCTION</scope>
    <scope>DISRUPTION PHENOTYPE</scope>
    <scope>TISSUE SPECIFICITY</scope>
</reference>
<reference key="4">
    <citation type="journal article" date="2005" name="Plant J.">
        <title>Genetic analysis of two Arabidopsis DNA polymerase epsilon subunits during early embryogenesis.</title>
        <authorList>
            <person name="Ronceret A."/>
            <person name="Guilleminot J."/>
            <person name="Lincker F."/>
            <person name="Gadea-Vacas J."/>
            <person name="Delorme V."/>
            <person name="Bechtold N."/>
            <person name="Pelletier G."/>
            <person name="Delseny M."/>
            <person name="Chaboute M.-E."/>
            <person name="Devic M."/>
        </authorList>
    </citation>
    <scope>FUNCTION</scope>
    <scope>DISRUPTION PHENOTYPE</scope>
    <scope>GENE FAMILY</scope>
    <scope>NOMENCLATURE</scope>
</reference>
<reference key="5">
    <citation type="journal article" date="2010" name="Plant J.">
        <title>EARLY IN SHORT DAYS 7 (ESD7) encodes the catalytic subunit of DNA polymerase epsilon and is required for flowering repression through a mechanism involving epigenetic gene silencing.</title>
        <authorList>
            <person name="del Olmo I."/>
            <person name="Lopez-Gonzalez L."/>
            <person name="Martin-Trillo M.M."/>
            <person name="Martinez-Zapater J.M."/>
            <person name="Pineiro M."/>
            <person name="Jarillo J.A."/>
        </authorList>
    </citation>
    <scope>FUNCTION</scope>
    <scope>DISRUPTION PHENOTYPE</scope>
</reference>
<protein>
    <recommendedName>
        <fullName>DNA polymerase epsilon catalytic subunit B</fullName>
        <ecNumber evidence="2">2.7.7.7</ecNumber>
    </recommendedName>
    <alternativeName>
        <fullName>DNA polymerase 2 b</fullName>
        <shortName>AtPOL2b</shortName>
    </alternativeName>
    <alternativeName>
        <fullName>DNA polymerase II subunit b</fullName>
    </alternativeName>
    <alternativeName>
        <fullName>Protein TILTED 2</fullName>
    </alternativeName>
</protein>
<comment type="function">
    <text evidence="1 4 5 6">DNA polymerase II, which participates in chromosomal DNA replication (By similarity). Involved in the determination of cell fate during plant embryogenesis. Contributes to the flowering time repression.</text>
</comment>
<comment type="catalytic activity">
    <reaction evidence="2">
        <text>DNA(n) + a 2'-deoxyribonucleoside 5'-triphosphate = DNA(n+1) + diphosphate</text>
        <dbReference type="Rhea" id="RHEA:22508"/>
        <dbReference type="Rhea" id="RHEA-COMP:17339"/>
        <dbReference type="Rhea" id="RHEA-COMP:17340"/>
        <dbReference type="ChEBI" id="CHEBI:33019"/>
        <dbReference type="ChEBI" id="CHEBI:61560"/>
        <dbReference type="ChEBI" id="CHEBI:173112"/>
        <dbReference type="EC" id="2.7.7.7"/>
    </reaction>
</comment>
<comment type="cofactor">
    <cofactor evidence="2">
        <name>[4Fe-4S] cluster</name>
        <dbReference type="ChEBI" id="CHEBI:49883"/>
    </cofactor>
    <text evidence="1 2">Binds 1 [4Fe-4S] cluster.</text>
</comment>
<comment type="subunit">
    <text evidence="1">Heterotetramer.</text>
</comment>
<comment type="subcellular location">
    <subcellularLocation>
        <location evidence="1">Nucleus</location>
    </subcellularLocation>
</comment>
<comment type="tissue specificity">
    <text evidence="5">Mostly expressed at low levels in inflorescence (floral meristem and flowers until anthesis), and, to a lower extent, in seeds.</text>
</comment>
<comment type="domain">
    <text evidence="3">The DNA polymerase activity domain resides in the N-terminal half of the protein, while the C-terminus is necessary for maintenance of the complex.</text>
</comment>
<comment type="domain">
    <text evidence="2">The CysA-type zinc finger is required for PCNA-binding.</text>
</comment>
<comment type="domain">
    <text evidence="2">The CysB motif binds 1 4Fe-4S cluster and is required for the formation of polymerase complexes.</text>
</comment>
<comment type="disruption phenotype">
    <text evidence="4 5 6">No visible effects. When associated with heterozygote POL2A disruption; lethal, with sporophytic embryo-defective with an arrest at the globular stage during embryo development. When associated with esd7-1 mutation of POL2A; very early flowering.</text>
</comment>
<comment type="similarity">
    <text evidence="7">Belongs to the DNA polymerase type-B family.</text>
</comment>
<comment type="sequence caution" evidence="7">
    <conflict type="erroneous gene model prediction">
        <sequence resource="EMBL-CDS" id="AAC77870"/>
    </conflict>
</comment>
<dbReference type="EC" id="2.7.7.7" evidence="2"/>
<dbReference type="EMBL" id="AC005623">
    <property type="protein sequence ID" value="AAC77870.1"/>
    <property type="status" value="ALT_SEQ"/>
    <property type="molecule type" value="Genomic_DNA"/>
</dbReference>
<dbReference type="EMBL" id="CP002685">
    <property type="protein sequence ID" value="AEC07940.1"/>
    <property type="molecule type" value="Genomic_DNA"/>
</dbReference>
<dbReference type="PIR" id="A84669">
    <property type="entry name" value="A84669"/>
</dbReference>
<dbReference type="RefSeq" id="NP_180280.2">
    <property type="nucleotide sequence ID" value="NM_128270.3"/>
</dbReference>
<dbReference type="SMR" id="F4IFN6"/>
<dbReference type="FunCoup" id="F4IFN6">
    <property type="interactions" value="2295"/>
</dbReference>
<dbReference type="STRING" id="3702.F4IFN6"/>
<dbReference type="iPTMnet" id="F4IFN6"/>
<dbReference type="PaxDb" id="3702-AT2G27120.1"/>
<dbReference type="EnsemblPlants" id="AT2G27120.1">
    <property type="protein sequence ID" value="AT2G27120.1"/>
    <property type="gene ID" value="AT2G27120"/>
</dbReference>
<dbReference type="GeneID" id="817254"/>
<dbReference type="Gramene" id="AT2G27120.1">
    <property type="protein sequence ID" value="AT2G27120.1"/>
    <property type="gene ID" value="AT2G27120"/>
</dbReference>
<dbReference type="KEGG" id="ath:AT2G27120"/>
<dbReference type="Araport" id="AT2G27120"/>
<dbReference type="TAIR" id="AT2G27120">
    <property type="gene designation" value="TIL2"/>
</dbReference>
<dbReference type="eggNOG" id="KOG1798">
    <property type="taxonomic scope" value="Eukaryota"/>
</dbReference>
<dbReference type="HOGENOM" id="CLU_000556_0_1_1"/>
<dbReference type="InParanoid" id="F4IFN6"/>
<dbReference type="PRO" id="PR:F4IFN6"/>
<dbReference type="Proteomes" id="UP000006548">
    <property type="component" value="Chromosome 2"/>
</dbReference>
<dbReference type="ExpressionAtlas" id="F4IFN6">
    <property type="expression patterns" value="baseline and differential"/>
</dbReference>
<dbReference type="GO" id="GO:0008622">
    <property type="term" value="C:epsilon DNA polymerase complex"/>
    <property type="evidence" value="ECO:0000250"/>
    <property type="project" value="UniProtKB"/>
</dbReference>
<dbReference type="GO" id="GO:0051539">
    <property type="term" value="F:4 iron, 4 sulfur cluster binding"/>
    <property type="evidence" value="ECO:0007669"/>
    <property type="project" value="UniProtKB-KW"/>
</dbReference>
<dbReference type="GO" id="GO:0003677">
    <property type="term" value="F:DNA binding"/>
    <property type="evidence" value="ECO:0007669"/>
    <property type="project" value="UniProtKB-KW"/>
</dbReference>
<dbReference type="GO" id="GO:0003887">
    <property type="term" value="F:DNA-directed DNA polymerase activity"/>
    <property type="evidence" value="ECO:0007669"/>
    <property type="project" value="UniProtKB-KW"/>
</dbReference>
<dbReference type="GO" id="GO:0000166">
    <property type="term" value="F:nucleotide binding"/>
    <property type="evidence" value="ECO:0007669"/>
    <property type="project" value="InterPro"/>
</dbReference>
<dbReference type="GO" id="GO:0008270">
    <property type="term" value="F:zinc ion binding"/>
    <property type="evidence" value="ECO:0007669"/>
    <property type="project" value="UniProtKB-KW"/>
</dbReference>
<dbReference type="GO" id="GO:0006281">
    <property type="term" value="P:DNA repair"/>
    <property type="evidence" value="ECO:0007669"/>
    <property type="project" value="InterPro"/>
</dbReference>
<dbReference type="GO" id="GO:0006260">
    <property type="term" value="P:DNA replication"/>
    <property type="evidence" value="ECO:0007669"/>
    <property type="project" value="UniProtKB-KW"/>
</dbReference>
<dbReference type="CDD" id="cd05779">
    <property type="entry name" value="DNA_polB_epsilon_exo"/>
    <property type="match status" value="1"/>
</dbReference>
<dbReference type="CDD" id="cd05535">
    <property type="entry name" value="POLBc_epsilon"/>
    <property type="match status" value="1"/>
</dbReference>
<dbReference type="FunFam" id="1.10.132.60:FF:000002">
    <property type="entry name" value="DNA polymerase epsilon catalytic subunit"/>
    <property type="match status" value="1"/>
</dbReference>
<dbReference type="FunFam" id="1.10.287.690:FF:000005">
    <property type="entry name" value="DNA polymerase epsilon catalytic subunit"/>
    <property type="match status" value="1"/>
</dbReference>
<dbReference type="FunFam" id="3.30.342.10:FF:000012">
    <property type="entry name" value="DNA polymerase epsilon catalytic subunit"/>
    <property type="match status" value="1"/>
</dbReference>
<dbReference type="FunFam" id="3.30.420.10:FF:000010">
    <property type="entry name" value="DNA polymerase epsilon catalytic subunit"/>
    <property type="match status" value="1"/>
</dbReference>
<dbReference type="FunFam" id="3.90.1600.10:FF:000006">
    <property type="entry name" value="DNA polymerase epsilon catalytic subunit"/>
    <property type="match status" value="1"/>
</dbReference>
<dbReference type="Gene3D" id="1.10.132.60">
    <property type="entry name" value="DNA polymerase family B, C-terminal domain"/>
    <property type="match status" value="1"/>
</dbReference>
<dbReference type="Gene3D" id="3.30.342.10">
    <property type="entry name" value="DNA Polymerase, chain B, domain 1"/>
    <property type="match status" value="1"/>
</dbReference>
<dbReference type="Gene3D" id="3.90.1600.10">
    <property type="entry name" value="Palm domain of DNA polymerase"/>
    <property type="match status" value="1"/>
</dbReference>
<dbReference type="Gene3D" id="3.30.420.10">
    <property type="entry name" value="Ribonuclease H-like superfamily/Ribonuclease H"/>
    <property type="match status" value="1"/>
</dbReference>
<dbReference type="InterPro" id="IPR006172">
    <property type="entry name" value="DNA-dir_DNA_pol_B"/>
</dbReference>
<dbReference type="InterPro" id="IPR006133">
    <property type="entry name" value="DNA-dir_DNA_pol_B_exonuc"/>
</dbReference>
<dbReference type="InterPro" id="IPR043502">
    <property type="entry name" value="DNA/RNA_pol_sf"/>
</dbReference>
<dbReference type="InterPro" id="IPR042087">
    <property type="entry name" value="DNA_pol_B_thumb"/>
</dbReference>
<dbReference type="InterPro" id="IPR013697">
    <property type="entry name" value="DNA_pol_e_suA_C"/>
</dbReference>
<dbReference type="InterPro" id="IPR023211">
    <property type="entry name" value="DNA_pol_palm_dom_sf"/>
</dbReference>
<dbReference type="InterPro" id="IPR029703">
    <property type="entry name" value="POL2"/>
</dbReference>
<dbReference type="InterPro" id="IPR055191">
    <property type="entry name" value="POL2_thumb"/>
</dbReference>
<dbReference type="InterPro" id="IPR012337">
    <property type="entry name" value="RNaseH-like_sf"/>
</dbReference>
<dbReference type="InterPro" id="IPR036397">
    <property type="entry name" value="RNaseH_sf"/>
</dbReference>
<dbReference type="InterPro" id="IPR054475">
    <property type="entry name" value="Znf-DPOE"/>
</dbReference>
<dbReference type="PANTHER" id="PTHR10670">
    <property type="entry name" value="DNA POLYMERASE EPSILON CATALYTIC SUBUNIT A"/>
    <property type="match status" value="1"/>
</dbReference>
<dbReference type="PANTHER" id="PTHR10670:SF0">
    <property type="entry name" value="DNA POLYMERASE EPSILON CATALYTIC SUBUNIT A"/>
    <property type="match status" value="1"/>
</dbReference>
<dbReference type="Pfam" id="PF03104">
    <property type="entry name" value="DNA_pol_B_exo1"/>
    <property type="match status" value="1"/>
</dbReference>
<dbReference type="Pfam" id="PF08490">
    <property type="entry name" value="DUF1744"/>
    <property type="match status" value="1"/>
</dbReference>
<dbReference type="Pfam" id="PF22634">
    <property type="entry name" value="POL2_thumb"/>
    <property type="match status" value="1"/>
</dbReference>
<dbReference type="Pfam" id="PF22912">
    <property type="entry name" value="zf-DPOE"/>
    <property type="match status" value="1"/>
</dbReference>
<dbReference type="Pfam" id="PF23250">
    <property type="entry name" value="zf_DPOE_2"/>
    <property type="match status" value="1"/>
</dbReference>
<dbReference type="SMART" id="SM01159">
    <property type="entry name" value="DUF1744"/>
    <property type="match status" value="1"/>
</dbReference>
<dbReference type="SMART" id="SM00486">
    <property type="entry name" value="POLBc"/>
    <property type="match status" value="1"/>
</dbReference>
<dbReference type="SUPFAM" id="SSF56672">
    <property type="entry name" value="DNA/RNA polymerases"/>
    <property type="match status" value="1"/>
</dbReference>
<dbReference type="SUPFAM" id="SSF53098">
    <property type="entry name" value="Ribonuclease H-like"/>
    <property type="match status" value="1"/>
</dbReference>
<gene>
    <name type="primary">POL2B</name>
    <name type="synonym">TIL2</name>
    <name type="ordered locus">At2g27120</name>
    <name type="ORF">T20P8.17</name>
</gene>
<feature type="chain" id="PRO_0000420241" description="DNA polymerase epsilon catalytic subunit B">
    <location>
        <begin position="1"/>
        <end position="2138"/>
    </location>
</feature>
<feature type="zinc finger region" description="CysA-type" evidence="2">
    <location>
        <begin position="2015"/>
        <end position="2045"/>
    </location>
</feature>
<feature type="short sequence motif" description="Nuclear localization signal 1" evidence="1">
    <location>
        <begin position="1224"/>
        <end position="1231"/>
    </location>
</feature>
<feature type="short sequence motif" description="CysB motif" evidence="2">
    <location>
        <begin position="2076"/>
        <end position="2093"/>
    </location>
</feature>
<feature type="short sequence motif" description="Nuclear localization signal 2" evidence="1">
    <location>
        <begin position="2107"/>
        <end position="2114"/>
    </location>
</feature>
<feature type="binding site" evidence="2">
    <location>
        <position position="2015"/>
    </location>
    <ligand>
        <name>Zn(2+)</name>
        <dbReference type="ChEBI" id="CHEBI:29105"/>
    </ligand>
</feature>
<feature type="binding site" evidence="2">
    <location>
        <position position="2018"/>
    </location>
    <ligand>
        <name>Zn(2+)</name>
        <dbReference type="ChEBI" id="CHEBI:29105"/>
    </ligand>
</feature>
<feature type="binding site" evidence="2">
    <location>
        <position position="2040"/>
    </location>
    <ligand>
        <name>Zn(2+)</name>
        <dbReference type="ChEBI" id="CHEBI:29105"/>
    </ligand>
</feature>
<feature type="binding site" evidence="2">
    <location>
        <position position="2045"/>
    </location>
    <ligand>
        <name>Zn(2+)</name>
        <dbReference type="ChEBI" id="CHEBI:29105"/>
    </ligand>
</feature>
<feature type="binding site" evidence="2">
    <location>
        <position position="2076"/>
    </location>
    <ligand>
        <name>[4Fe-4S] cluster</name>
        <dbReference type="ChEBI" id="CHEBI:49883"/>
    </ligand>
</feature>
<feature type="binding site" evidence="2">
    <location>
        <position position="2079"/>
    </location>
    <ligand>
        <name>[4Fe-4S] cluster</name>
        <dbReference type="ChEBI" id="CHEBI:49883"/>
    </ligand>
</feature>
<feature type="binding site" evidence="2">
    <location>
        <position position="2091"/>
    </location>
    <ligand>
        <name>[4Fe-4S] cluster</name>
        <dbReference type="ChEBI" id="CHEBI:49883"/>
    </ligand>
</feature>
<feature type="binding site" evidence="2">
    <location>
        <position position="2093"/>
    </location>
    <ligand>
        <name>[4Fe-4S] cluster</name>
        <dbReference type="ChEBI" id="CHEBI:49883"/>
    </ligand>
</feature>
<proteinExistence type="evidence at transcript level"/>
<organism>
    <name type="scientific">Arabidopsis thaliana</name>
    <name type="common">Mouse-ear cress</name>
    <dbReference type="NCBI Taxonomy" id="3702"/>
    <lineage>
        <taxon>Eukaryota</taxon>
        <taxon>Viridiplantae</taxon>
        <taxon>Streptophyta</taxon>
        <taxon>Embryophyta</taxon>
        <taxon>Tracheophyta</taxon>
        <taxon>Spermatophyta</taxon>
        <taxon>Magnoliopsida</taxon>
        <taxon>eudicotyledons</taxon>
        <taxon>Gunneridae</taxon>
        <taxon>Pentapetalae</taxon>
        <taxon>rosids</taxon>
        <taxon>malvids</taxon>
        <taxon>Brassicales</taxon>
        <taxon>Brassicaceae</taxon>
        <taxon>Camelineae</taxon>
        <taxon>Arabidopsis</taxon>
    </lineage>
</organism>